<organism>
    <name type="scientific">Mycobacterium sp. (strain JLS)</name>
    <dbReference type="NCBI Taxonomy" id="164757"/>
    <lineage>
        <taxon>Bacteria</taxon>
        <taxon>Bacillati</taxon>
        <taxon>Actinomycetota</taxon>
        <taxon>Actinomycetes</taxon>
        <taxon>Mycobacteriales</taxon>
        <taxon>Mycobacteriaceae</taxon>
        <taxon>Mycobacterium</taxon>
    </lineage>
</organism>
<feature type="chain" id="PRO_1000056259" description="Demethylmenaquinone methyltransferase">
    <location>
        <begin position="1"/>
        <end position="230"/>
    </location>
</feature>
<feature type="binding site" evidence="1">
    <location>
        <position position="62"/>
    </location>
    <ligand>
        <name>S-adenosyl-L-methionine</name>
        <dbReference type="ChEBI" id="CHEBI:59789"/>
    </ligand>
</feature>
<feature type="binding site" evidence="1">
    <location>
        <position position="80"/>
    </location>
    <ligand>
        <name>S-adenosyl-L-methionine</name>
        <dbReference type="ChEBI" id="CHEBI:59789"/>
    </ligand>
</feature>
<feature type="binding site" evidence="1">
    <location>
        <begin position="100"/>
        <end position="101"/>
    </location>
    <ligand>
        <name>S-adenosyl-L-methionine</name>
        <dbReference type="ChEBI" id="CHEBI:59789"/>
    </ligand>
</feature>
<feature type="binding site" evidence="1">
    <location>
        <position position="117"/>
    </location>
    <ligand>
        <name>S-adenosyl-L-methionine</name>
        <dbReference type="ChEBI" id="CHEBI:59789"/>
    </ligand>
</feature>
<evidence type="ECO:0000255" key="1">
    <source>
        <dbReference type="HAMAP-Rule" id="MF_01813"/>
    </source>
</evidence>
<dbReference type="EC" id="2.1.1.163" evidence="1"/>
<dbReference type="EMBL" id="CP000580">
    <property type="protein sequence ID" value="ABN96568.1"/>
    <property type="molecule type" value="Genomic_DNA"/>
</dbReference>
<dbReference type="SMR" id="A3PUJ1"/>
<dbReference type="KEGG" id="mjl:Mjls_0757"/>
<dbReference type="HOGENOM" id="CLU_037990_0_0_11"/>
<dbReference type="BioCyc" id="MSP164757:G1G8C-764-MONOMER"/>
<dbReference type="UniPathway" id="UPA00079">
    <property type="reaction ID" value="UER00169"/>
</dbReference>
<dbReference type="GO" id="GO:0043770">
    <property type="term" value="F:demethylmenaquinone methyltransferase activity"/>
    <property type="evidence" value="ECO:0007669"/>
    <property type="project" value="UniProtKB-UniRule"/>
</dbReference>
<dbReference type="GO" id="GO:0009234">
    <property type="term" value="P:menaquinone biosynthetic process"/>
    <property type="evidence" value="ECO:0007669"/>
    <property type="project" value="UniProtKB-UniRule"/>
</dbReference>
<dbReference type="GO" id="GO:0032259">
    <property type="term" value="P:methylation"/>
    <property type="evidence" value="ECO:0007669"/>
    <property type="project" value="UniProtKB-KW"/>
</dbReference>
<dbReference type="CDD" id="cd02440">
    <property type="entry name" value="AdoMet_MTases"/>
    <property type="match status" value="1"/>
</dbReference>
<dbReference type="Gene3D" id="3.40.50.150">
    <property type="entry name" value="Vaccinia Virus protein VP39"/>
    <property type="match status" value="1"/>
</dbReference>
<dbReference type="HAMAP" id="MF_01813">
    <property type="entry name" value="MenG_UbiE_methyltr"/>
    <property type="match status" value="1"/>
</dbReference>
<dbReference type="InterPro" id="IPR029063">
    <property type="entry name" value="SAM-dependent_MTases_sf"/>
</dbReference>
<dbReference type="InterPro" id="IPR004033">
    <property type="entry name" value="UbiE/COQ5_MeTrFase"/>
</dbReference>
<dbReference type="InterPro" id="IPR023576">
    <property type="entry name" value="UbiE/COQ5_MeTrFase_CS"/>
</dbReference>
<dbReference type="NCBIfam" id="TIGR01934">
    <property type="entry name" value="MenG_MenH_UbiE"/>
    <property type="match status" value="1"/>
</dbReference>
<dbReference type="NCBIfam" id="NF001241">
    <property type="entry name" value="PRK00216.1-2"/>
    <property type="match status" value="1"/>
</dbReference>
<dbReference type="PANTHER" id="PTHR43591:SF24">
    <property type="entry name" value="2-METHOXY-6-POLYPRENYL-1,4-BENZOQUINOL METHYLASE, MITOCHONDRIAL"/>
    <property type="match status" value="1"/>
</dbReference>
<dbReference type="PANTHER" id="PTHR43591">
    <property type="entry name" value="METHYLTRANSFERASE"/>
    <property type="match status" value="1"/>
</dbReference>
<dbReference type="Pfam" id="PF01209">
    <property type="entry name" value="Ubie_methyltran"/>
    <property type="match status" value="1"/>
</dbReference>
<dbReference type="SUPFAM" id="SSF53335">
    <property type="entry name" value="S-adenosyl-L-methionine-dependent methyltransferases"/>
    <property type="match status" value="1"/>
</dbReference>
<dbReference type="PROSITE" id="PS51608">
    <property type="entry name" value="SAM_MT_UBIE"/>
    <property type="match status" value="1"/>
</dbReference>
<dbReference type="PROSITE" id="PS01183">
    <property type="entry name" value="UBIE_1"/>
    <property type="match status" value="1"/>
</dbReference>
<dbReference type="PROSITE" id="PS01184">
    <property type="entry name" value="UBIE_2"/>
    <property type="match status" value="1"/>
</dbReference>
<name>MENG_MYCSJ</name>
<gene>
    <name evidence="1" type="primary">menG</name>
    <name type="ordered locus">Mjls_0757</name>
</gene>
<accession>A3PUJ1</accession>
<keyword id="KW-0474">Menaquinone biosynthesis</keyword>
<keyword id="KW-0489">Methyltransferase</keyword>
<keyword id="KW-0949">S-adenosyl-L-methionine</keyword>
<keyword id="KW-0808">Transferase</keyword>
<reference key="1">
    <citation type="submission" date="2007-02" db="EMBL/GenBank/DDBJ databases">
        <title>Complete sequence of Mycobacterium sp. JLS.</title>
        <authorList>
            <consortium name="US DOE Joint Genome Institute"/>
            <person name="Copeland A."/>
            <person name="Lucas S."/>
            <person name="Lapidus A."/>
            <person name="Barry K."/>
            <person name="Detter J.C."/>
            <person name="Glavina del Rio T."/>
            <person name="Hammon N."/>
            <person name="Israni S."/>
            <person name="Dalin E."/>
            <person name="Tice H."/>
            <person name="Pitluck S."/>
            <person name="Chain P."/>
            <person name="Malfatti S."/>
            <person name="Shin M."/>
            <person name="Vergez L."/>
            <person name="Schmutz J."/>
            <person name="Larimer F."/>
            <person name="Land M."/>
            <person name="Hauser L."/>
            <person name="Kyrpides N."/>
            <person name="Mikhailova N."/>
            <person name="Miller C.D."/>
            <person name="Anderson A.J."/>
            <person name="Sims R.C."/>
            <person name="Richardson P."/>
        </authorList>
    </citation>
    <scope>NUCLEOTIDE SEQUENCE [LARGE SCALE GENOMIC DNA]</scope>
    <source>
        <strain>JLS</strain>
    </source>
</reference>
<proteinExistence type="inferred from homology"/>
<protein>
    <recommendedName>
        <fullName evidence="1">Demethylmenaquinone methyltransferase</fullName>
        <ecNumber evidence="1">2.1.1.163</ecNumber>
    </recommendedName>
</protein>
<sequence length="230" mass="24879">MSRATLDKNPHEVASMFDAVARRYDLTNTVLSLGQDRFWRRETCAALGIGPGDKVLDLAAGTAVSTVELAASGAWCVAADFSVGMLSAGRQRDVPKVAGDATRLPFADESFDAVTISFGLRNVVDHVAGLEEMARVTRPGGRLVVCEFSTPTNRAFATLYKEYLMKALPRMARAVASNPDAYVYLAESIRAWPDQAGLARRIEAAGWSQVRWRNLTGGIVALHAAVKPPR</sequence>
<comment type="function">
    <text evidence="1">Methyltransferase required for the conversion of demethylmenaquinol (DMKH2) to menaquinol (MKH2).</text>
</comment>
<comment type="catalytic activity">
    <reaction evidence="1">
        <text>a 2-demethylmenaquinol + S-adenosyl-L-methionine = a menaquinol + S-adenosyl-L-homocysteine + H(+)</text>
        <dbReference type="Rhea" id="RHEA:42640"/>
        <dbReference type="Rhea" id="RHEA-COMP:9539"/>
        <dbReference type="Rhea" id="RHEA-COMP:9563"/>
        <dbReference type="ChEBI" id="CHEBI:15378"/>
        <dbReference type="ChEBI" id="CHEBI:18151"/>
        <dbReference type="ChEBI" id="CHEBI:55437"/>
        <dbReference type="ChEBI" id="CHEBI:57856"/>
        <dbReference type="ChEBI" id="CHEBI:59789"/>
        <dbReference type="EC" id="2.1.1.163"/>
    </reaction>
</comment>
<comment type="pathway">
    <text evidence="1">Quinol/quinone metabolism; menaquinone biosynthesis; menaquinol from 1,4-dihydroxy-2-naphthoate: step 2/2.</text>
</comment>
<comment type="similarity">
    <text evidence="1">Belongs to the class I-like SAM-binding methyltransferase superfamily. MenG/UbiE family.</text>
</comment>